<gene>
    <name type="primary">trmt12</name>
    <name type="synonym">tyw2</name>
    <name type="ORF">zgc:153361</name>
</gene>
<organism>
    <name type="scientific">Danio rerio</name>
    <name type="common">Zebrafish</name>
    <name type="synonym">Brachydanio rerio</name>
    <dbReference type="NCBI Taxonomy" id="7955"/>
    <lineage>
        <taxon>Eukaryota</taxon>
        <taxon>Metazoa</taxon>
        <taxon>Chordata</taxon>
        <taxon>Craniata</taxon>
        <taxon>Vertebrata</taxon>
        <taxon>Euteleostomi</taxon>
        <taxon>Actinopterygii</taxon>
        <taxon>Neopterygii</taxon>
        <taxon>Teleostei</taxon>
        <taxon>Ostariophysi</taxon>
        <taxon>Cypriniformes</taxon>
        <taxon>Danionidae</taxon>
        <taxon>Danioninae</taxon>
        <taxon>Danio</taxon>
    </lineage>
</organism>
<dbReference type="EC" id="2.5.1.114"/>
<dbReference type="EMBL" id="BC122254">
    <property type="protein sequence ID" value="AAI22255.1"/>
    <property type="molecule type" value="mRNA"/>
</dbReference>
<dbReference type="RefSeq" id="NP_001070632.1">
    <property type="nucleotide sequence ID" value="NM_001077164.1"/>
</dbReference>
<dbReference type="SMR" id="Q0P466"/>
<dbReference type="FunCoup" id="Q0P466">
    <property type="interactions" value="240"/>
</dbReference>
<dbReference type="STRING" id="7955.ENSDARP00000079349"/>
<dbReference type="PaxDb" id="7955-ENSDARP00000079349"/>
<dbReference type="GeneID" id="564925"/>
<dbReference type="KEGG" id="dre:564925"/>
<dbReference type="AGR" id="ZFIN:ZDB-GENE-060825-182"/>
<dbReference type="CTD" id="55039"/>
<dbReference type="ZFIN" id="ZDB-GENE-060825-182">
    <property type="gene designation" value="trmt12"/>
</dbReference>
<dbReference type="eggNOG" id="KOG1227">
    <property type="taxonomic scope" value="Eukaryota"/>
</dbReference>
<dbReference type="InParanoid" id="Q0P466"/>
<dbReference type="OrthoDB" id="408788at2759"/>
<dbReference type="PhylomeDB" id="Q0P466"/>
<dbReference type="UniPathway" id="UPA00375"/>
<dbReference type="PRO" id="PR:Q0P466"/>
<dbReference type="Proteomes" id="UP000000437">
    <property type="component" value="Chromosome 14"/>
</dbReference>
<dbReference type="GO" id="GO:0005737">
    <property type="term" value="C:cytoplasm"/>
    <property type="evidence" value="ECO:0000318"/>
    <property type="project" value="GO_Central"/>
</dbReference>
<dbReference type="GO" id="GO:0102522">
    <property type="term" value="F:tRNA 4-demethylwyosine alpha-amino-alpha-carboxypropyltransferase activity"/>
    <property type="evidence" value="ECO:0007669"/>
    <property type="project" value="UniProtKB-EC"/>
</dbReference>
<dbReference type="GO" id="GO:0008175">
    <property type="term" value="F:tRNA methyltransferase activity"/>
    <property type="evidence" value="ECO:0000318"/>
    <property type="project" value="GO_Central"/>
</dbReference>
<dbReference type="GO" id="GO:0030488">
    <property type="term" value="P:tRNA methylation"/>
    <property type="evidence" value="ECO:0000318"/>
    <property type="project" value="GO_Central"/>
</dbReference>
<dbReference type="GO" id="GO:0031591">
    <property type="term" value="P:wybutosine biosynthetic process"/>
    <property type="evidence" value="ECO:0000318"/>
    <property type="project" value="GO_Central"/>
</dbReference>
<dbReference type="CDD" id="cd02440">
    <property type="entry name" value="AdoMet_MTases"/>
    <property type="match status" value="1"/>
</dbReference>
<dbReference type="FunFam" id="3.30.300.110:FF:000002">
    <property type="entry name" value="tRNA wybutosine-synthesizing protein 2 homolog"/>
    <property type="match status" value="1"/>
</dbReference>
<dbReference type="FunFam" id="3.40.50.150:FF:000201">
    <property type="entry name" value="tRNA wybutosine-synthesizing protein 2 homolog"/>
    <property type="match status" value="1"/>
</dbReference>
<dbReference type="Gene3D" id="3.30.300.110">
    <property type="entry name" value="Met-10+ protein-like domains"/>
    <property type="match status" value="1"/>
</dbReference>
<dbReference type="Gene3D" id="3.40.50.150">
    <property type="entry name" value="Vaccinia Virus protein VP39"/>
    <property type="match status" value="1"/>
</dbReference>
<dbReference type="InterPro" id="IPR030382">
    <property type="entry name" value="MeTrfase_TRM5/TYW2"/>
</dbReference>
<dbReference type="InterPro" id="IPR029063">
    <property type="entry name" value="SAM-dependent_MTases_sf"/>
</dbReference>
<dbReference type="InterPro" id="IPR056743">
    <property type="entry name" value="TRM5-TYW2-like_MTfase"/>
</dbReference>
<dbReference type="InterPro" id="IPR056744">
    <property type="entry name" value="TRM5/TYW2-like_N"/>
</dbReference>
<dbReference type="InterPro" id="IPR056745">
    <property type="entry name" value="TYW2_N"/>
</dbReference>
<dbReference type="PANTHER" id="PTHR23245">
    <property type="entry name" value="TRNA METHYLTRANSFERASE"/>
    <property type="match status" value="1"/>
</dbReference>
<dbReference type="PANTHER" id="PTHR23245:SF25">
    <property type="entry name" value="TRNA WYBUTOSINE-SYNTHESIZING PROTEIN 2 HOMOLOG"/>
    <property type="match status" value="1"/>
</dbReference>
<dbReference type="Pfam" id="PF02475">
    <property type="entry name" value="TRM5-TYW2_MTfase"/>
    <property type="match status" value="1"/>
</dbReference>
<dbReference type="Pfam" id="PF25132">
    <property type="entry name" value="TYW2_N"/>
    <property type="match status" value="1"/>
</dbReference>
<dbReference type="Pfam" id="PF25133">
    <property type="entry name" value="TYW2_N_2"/>
    <property type="match status" value="1"/>
</dbReference>
<dbReference type="SUPFAM" id="SSF53335">
    <property type="entry name" value="S-adenosyl-L-methionine-dependent methyltransferases"/>
    <property type="match status" value="1"/>
</dbReference>
<dbReference type="PROSITE" id="PS51684">
    <property type="entry name" value="SAM_MT_TRM5_TYW2"/>
    <property type="match status" value="1"/>
</dbReference>
<feature type="chain" id="PRO_0000281840" description="tRNA wybutosine-synthesizing protein 2 homolog">
    <location>
        <begin position="1"/>
        <end position="408"/>
    </location>
</feature>
<feature type="binding site" evidence="2">
    <location>
        <position position="201"/>
    </location>
    <ligand>
        <name>S-adenosyl-L-methionine</name>
        <dbReference type="ChEBI" id="CHEBI:59789"/>
    </ligand>
</feature>
<feature type="binding site" evidence="2">
    <location>
        <position position="208"/>
    </location>
    <ligand>
        <name>S-adenosyl-L-methionine</name>
        <dbReference type="ChEBI" id="CHEBI:59789"/>
    </ligand>
</feature>
<feature type="binding site" evidence="2">
    <location>
        <position position="248"/>
    </location>
    <ligand>
        <name>S-adenosyl-L-methionine</name>
        <dbReference type="ChEBI" id="CHEBI:59789"/>
    </ligand>
</feature>
<feature type="binding site" evidence="2">
    <location>
        <begin position="276"/>
        <end position="277"/>
    </location>
    <ligand>
        <name>S-adenosyl-L-methionine</name>
        <dbReference type="ChEBI" id="CHEBI:59789"/>
    </ligand>
</feature>
<proteinExistence type="evidence at transcript level"/>
<sequence length="408" mass="45530">MDVVPCLKVPQRHAQMYRKYLESQGVLDRRYGAEKHSDGTVTLLVVASALPQLDLVALKEHVAHDSFCEIVDIQAQLSKKSKVKSVHMKLVEAARSFLLSKGKEWSEDLGRDIPGRWQCHGDLVLFTEGCFSNAVWKEIGSEFWTAVALTLGVKRIAQIKKISQDGYRTPIVTMLLGDSSHVTHIDNHIRYEFDVTKCMFSSGNITEKLRIASFDCSGETVVDLYAGIGYFTLPYLVHANAAHVHACEWNPDAVAALQRNLEINGVSNRCTVHQGDNRQLSLSDLADRVNLGLIPSSEEGWPVACRLLKRSTGGIMHIHQNVTAPFHHEPSELNSSVEGSSVEVSPLRIQKDMQVWTAWASETAKRICTLLLGITGSEWKTNIRHIEHVKTYAPHISHVVLDLECKPL</sequence>
<evidence type="ECO:0000250" key="1"/>
<evidence type="ECO:0000255" key="2">
    <source>
        <dbReference type="PROSITE-ProRule" id="PRU01021"/>
    </source>
</evidence>
<protein>
    <recommendedName>
        <fullName>tRNA wybutosine-synthesizing protein 2 homolog</fullName>
        <shortName>tRNA-yW-synthesizing protein 2</shortName>
        <ecNumber>2.5.1.114</ecNumber>
    </recommendedName>
    <alternativeName>
        <fullName>tRNA(Phe) (4-demethylwyosine(37)-C(7)) aminocarboxypropyltransferase</fullName>
    </alternativeName>
</protein>
<comment type="function">
    <text evidence="1">S-adenosyl-L-methionine-dependent transferase that acts as a component of the wybutosine biosynthesis pathway. Wybutosine is a hyper modified guanosine with a tricyclic base found at the 3'-position adjacent to the anticodon of eukaryotic phenylalanine tRNA. Catalyzes the transfer of the alpha-amino-alpha-carboxypropyl (acp) group from S-adenosyl-L-methionine to the C-7 position of 4-demethylwyosine (imG-14) to produce wybutosine-86 (By similarity).</text>
</comment>
<comment type="catalytic activity">
    <reaction>
        <text>4-demethylwyosine(37) in tRNA(Phe) + S-adenosyl-L-methionine = 4-demethyl-7-[(3S)-3-amino-3-carboxypropyl]wyosine(37) in tRNA(Phe) + S-methyl-5'-thioadenosine + H(+)</text>
        <dbReference type="Rhea" id="RHEA:36355"/>
        <dbReference type="Rhea" id="RHEA-COMP:10164"/>
        <dbReference type="Rhea" id="RHEA-COMP:10378"/>
        <dbReference type="ChEBI" id="CHEBI:15378"/>
        <dbReference type="ChEBI" id="CHEBI:17509"/>
        <dbReference type="ChEBI" id="CHEBI:59789"/>
        <dbReference type="ChEBI" id="CHEBI:64315"/>
        <dbReference type="ChEBI" id="CHEBI:73550"/>
        <dbReference type="EC" id="2.5.1.114"/>
    </reaction>
</comment>
<comment type="pathway">
    <text>tRNA modification; wybutosine-tRNA(Phe) biosynthesis.</text>
</comment>
<comment type="similarity">
    <text evidence="2">Belongs to the class I-like SAM-binding methyltransferase superfamily. TRM5/TYW2 family.</text>
</comment>
<keyword id="KW-1185">Reference proteome</keyword>
<keyword id="KW-0949">S-adenosyl-L-methionine</keyword>
<keyword id="KW-0808">Transferase</keyword>
<keyword id="KW-0819">tRNA processing</keyword>
<reference key="1">
    <citation type="submission" date="2006-08" db="EMBL/GenBank/DDBJ databases">
        <authorList>
            <consortium name="NIH - Zebrafish Gene Collection (ZGC) project"/>
        </authorList>
    </citation>
    <scope>NUCLEOTIDE SEQUENCE [LARGE SCALE MRNA]</scope>
    <source>
        <tissue>Ovary</tissue>
    </source>
</reference>
<accession>Q0P466</accession>
<name>TYW2_DANRE</name>